<sequence length="64" mass="7335">MASKKGVRITITVECTECRTNTNKRSNGVSRYTTSKNRRNTTGRLEIKKFCPHCNAHTVHKEIK</sequence>
<keyword id="KW-1185">Reference proteome</keyword>
<keyword id="KW-0687">Ribonucleoprotein</keyword>
<keyword id="KW-0689">Ribosomal protein</keyword>
<name>RL33_PICP2</name>
<feature type="chain" id="PRO_1000115162" description="Large ribosomal subunit protein bL33">
    <location>
        <begin position="1"/>
        <end position="64"/>
    </location>
</feature>
<protein>
    <recommendedName>
        <fullName evidence="1">Large ribosomal subunit protein bL33</fullName>
    </recommendedName>
    <alternativeName>
        <fullName evidence="2">50S ribosomal protein L33</fullName>
    </alternativeName>
</protein>
<organism>
    <name type="scientific">Picosynechococcus sp. (strain ATCC 27264 / PCC 7002 / PR-6)</name>
    <name type="common">Agmenellum quadruplicatum</name>
    <dbReference type="NCBI Taxonomy" id="32049"/>
    <lineage>
        <taxon>Bacteria</taxon>
        <taxon>Bacillati</taxon>
        <taxon>Cyanobacteriota</taxon>
        <taxon>Cyanophyceae</taxon>
        <taxon>Oscillatoriophycideae</taxon>
        <taxon>Chroococcales</taxon>
        <taxon>Geminocystaceae</taxon>
        <taxon>Picosynechococcus</taxon>
    </lineage>
</organism>
<accession>B1XPV1</accession>
<dbReference type="EMBL" id="CP000951">
    <property type="protein sequence ID" value="ACA98579.1"/>
    <property type="molecule type" value="Genomic_DNA"/>
</dbReference>
<dbReference type="RefSeq" id="WP_012306203.1">
    <property type="nucleotide sequence ID" value="NZ_JAHHPU010000001.1"/>
</dbReference>
<dbReference type="STRING" id="32049.SYNPCC7002_A0572"/>
<dbReference type="KEGG" id="syp:SYNPCC7002_A0572"/>
<dbReference type="eggNOG" id="COG0267">
    <property type="taxonomic scope" value="Bacteria"/>
</dbReference>
<dbReference type="HOGENOM" id="CLU_190949_3_0_3"/>
<dbReference type="Proteomes" id="UP000001688">
    <property type="component" value="Chromosome"/>
</dbReference>
<dbReference type="GO" id="GO:0005737">
    <property type="term" value="C:cytoplasm"/>
    <property type="evidence" value="ECO:0007669"/>
    <property type="project" value="UniProtKB-ARBA"/>
</dbReference>
<dbReference type="GO" id="GO:1990904">
    <property type="term" value="C:ribonucleoprotein complex"/>
    <property type="evidence" value="ECO:0007669"/>
    <property type="project" value="UniProtKB-KW"/>
</dbReference>
<dbReference type="GO" id="GO:0005840">
    <property type="term" value="C:ribosome"/>
    <property type="evidence" value="ECO:0007669"/>
    <property type="project" value="UniProtKB-KW"/>
</dbReference>
<dbReference type="GO" id="GO:0003735">
    <property type="term" value="F:structural constituent of ribosome"/>
    <property type="evidence" value="ECO:0007669"/>
    <property type="project" value="InterPro"/>
</dbReference>
<dbReference type="GO" id="GO:0006412">
    <property type="term" value="P:translation"/>
    <property type="evidence" value="ECO:0007669"/>
    <property type="project" value="UniProtKB-UniRule"/>
</dbReference>
<dbReference type="Gene3D" id="2.20.28.120">
    <property type="entry name" value="Ribosomal protein L33"/>
    <property type="match status" value="1"/>
</dbReference>
<dbReference type="HAMAP" id="MF_00294">
    <property type="entry name" value="Ribosomal_bL33"/>
    <property type="match status" value="1"/>
</dbReference>
<dbReference type="InterPro" id="IPR001705">
    <property type="entry name" value="Ribosomal_bL33"/>
</dbReference>
<dbReference type="InterPro" id="IPR018264">
    <property type="entry name" value="Ribosomal_bL33_CS"/>
</dbReference>
<dbReference type="InterPro" id="IPR038584">
    <property type="entry name" value="Ribosomal_bL33_sf"/>
</dbReference>
<dbReference type="InterPro" id="IPR011332">
    <property type="entry name" value="Ribosomal_zn-bd"/>
</dbReference>
<dbReference type="NCBIfam" id="NF001764">
    <property type="entry name" value="PRK00504.1"/>
    <property type="match status" value="1"/>
</dbReference>
<dbReference type="NCBIfam" id="NF001860">
    <property type="entry name" value="PRK00595.1"/>
    <property type="match status" value="1"/>
</dbReference>
<dbReference type="NCBIfam" id="TIGR01023">
    <property type="entry name" value="rpmG_bact"/>
    <property type="match status" value="1"/>
</dbReference>
<dbReference type="PANTHER" id="PTHR43168">
    <property type="entry name" value="50S RIBOSOMAL PROTEIN L33, CHLOROPLASTIC"/>
    <property type="match status" value="1"/>
</dbReference>
<dbReference type="PANTHER" id="PTHR43168:SF2">
    <property type="entry name" value="LARGE RIBOSOMAL SUBUNIT PROTEIN BL33C"/>
    <property type="match status" value="1"/>
</dbReference>
<dbReference type="Pfam" id="PF00471">
    <property type="entry name" value="Ribosomal_L33"/>
    <property type="match status" value="1"/>
</dbReference>
<dbReference type="SUPFAM" id="SSF57829">
    <property type="entry name" value="Zn-binding ribosomal proteins"/>
    <property type="match status" value="1"/>
</dbReference>
<dbReference type="PROSITE" id="PS00582">
    <property type="entry name" value="RIBOSOMAL_L33"/>
    <property type="match status" value="1"/>
</dbReference>
<reference key="1">
    <citation type="submission" date="2008-02" db="EMBL/GenBank/DDBJ databases">
        <title>Complete sequence of Synechococcus sp. PCC 7002.</title>
        <authorList>
            <person name="Li T."/>
            <person name="Zhao J."/>
            <person name="Zhao C."/>
            <person name="Liu Z."/>
            <person name="Zhao F."/>
            <person name="Marquardt J."/>
            <person name="Nomura C.T."/>
            <person name="Persson S."/>
            <person name="Detter J.C."/>
            <person name="Richardson P.M."/>
            <person name="Lanz C."/>
            <person name="Schuster S.C."/>
            <person name="Wang J."/>
            <person name="Li S."/>
            <person name="Huang X."/>
            <person name="Cai T."/>
            <person name="Yu Z."/>
            <person name="Luo J."/>
            <person name="Zhao J."/>
            <person name="Bryant D.A."/>
        </authorList>
    </citation>
    <scope>NUCLEOTIDE SEQUENCE [LARGE SCALE GENOMIC DNA]</scope>
    <source>
        <strain>ATCC 27264 / PCC 7002 / PR-6</strain>
    </source>
</reference>
<proteinExistence type="inferred from homology"/>
<gene>
    <name evidence="1" type="primary">rpmG</name>
    <name evidence="1" type="synonym">rpl33</name>
    <name type="ordered locus">SYNPCC7002_A0572</name>
</gene>
<comment type="similarity">
    <text evidence="1">Belongs to the bacterial ribosomal protein bL33 family.</text>
</comment>
<evidence type="ECO:0000255" key="1">
    <source>
        <dbReference type="HAMAP-Rule" id="MF_00294"/>
    </source>
</evidence>
<evidence type="ECO:0000305" key="2"/>